<feature type="chain" id="PRO_0000236509" description="Large ribosomal subunit protein bL9">
    <location>
        <begin position="1"/>
        <end position="150"/>
    </location>
</feature>
<protein>
    <recommendedName>
        <fullName evidence="1">Large ribosomal subunit protein bL9</fullName>
    </recommendedName>
    <alternativeName>
        <fullName evidence="2">50S ribosomal protein L9</fullName>
    </alternativeName>
</protein>
<name>RL9_COLP3</name>
<accession>Q489T8</accession>
<dbReference type="EMBL" id="CP000083">
    <property type="protein sequence ID" value="AAZ26192.1"/>
    <property type="molecule type" value="Genomic_DNA"/>
</dbReference>
<dbReference type="RefSeq" id="WP_011041279.1">
    <property type="nucleotide sequence ID" value="NC_003910.7"/>
</dbReference>
<dbReference type="SMR" id="Q489T8"/>
<dbReference type="STRING" id="167879.CPS_0418"/>
<dbReference type="KEGG" id="cps:CPS_0418"/>
<dbReference type="eggNOG" id="COG0359">
    <property type="taxonomic scope" value="Bacteria"/>
</dbReference>
<dbReference type="HOGENOM" id="CLU_078938_4_1_6"/>
<dbReference type="Proteomes" id="UP000000547">
    <property type="component" value="Chromosome"/>
</dbReference>
<dbReference type="GO" id="GO:1990904">
    <property type="term" value="C:ribonucleoprotein complex"/>
    <property type="evidence" value="ECO:0007669"/>
    <property type="project" value="UniProtKB-KW"/>
</dbReference>
<dbReference type="GO" id="GO:0005840">
    <property type="term" value="C:ribosome"/>
    <property type="evidence" value="ECO:0007669"/>
    <property type="project" value="UniProtKB-KW"/>
</dbReference>
<dbReference type="GO" id="GO:0019843">
    <property type="term" value="F:rRNA binding"/>
    <property type="evidence" value="ECO:0007669"/>
    <property type="project" value="UniProtKB-UniRule"/>
</dbReference>
<dbReference type="GO" id="GO:0003735">
    <property type="term" value="F:structural constituent of ribosome"/>
    <property type="evidence" value="ECO:0007669"/>
    <property type="project" value="InterPro"/>
</dbReference>
<dbReference type="GO" id="GO:0006412">
    <property type="term" value="P:translation"/>
    <property type="evidence" value="ECO:0007669"/>
    <property type="project" value="UniProtKB-UniRule"/>
</dbReference>
<dbReference type="Gene3D" id="3.10.430.100">
    <property type="entry name" value="Ribosomal protein L9, C-terminal domain"/>
    <property type="match status" value="1"/>
</dbReference>
<dbReference type="Gene3D" id="3.40.5.10">
    <property type="entry name" value="Ribosomal protein L9, N-terminal domain"/>
    <property type="match status" value="1"/>
</dbReference>
<dbReference type="HAMAP" id="MF_00503">
    <property type="entry name" value="Ribosomal_bL9"/>
    <property type="match status" value="1"/>
</dbReference>
<dbReference type="InterPro" id="IPR000244">
    <property type="entry name" value="Ribosomal_bL9"/>
</dbReference>
<dbReference type="InterPro" id="IPR009027">
    <property type="entry name" value="Ribosomal_bL9/RNase_H1_N"/>
</dbReference>
<dbReference type="InterPro" id="IPR020594">
    <property type="entry name" value="Ribosomal_bL9_bac/chp"/>
</dbReference>
<dbReference type="InterPro" id="IPR020069">
    <property type="entry name" value="Ribosomal_bL9_C"/>
</dbReference>
<dbReference type="InterPro" id="IPR036791">
    <property type="entry name" value="Ribosomal_bL9_C_sf"/>
</dbReference>
<dbReference type="InterPro" id="IPR020070">
    <property type="entry name" value="Ribosomal_bL9_N"/>
</dbReference>
<dbReference type="InterPro" id="IPR036935">
    <property type="entry name" value="Ribosomal_bL9_N_sf"/>
</dbReference>
<dbReference type="NCBIfam" id="TIGR00158">
    <property type="entry name" value="L9"/>
    <property type="match status" value="1"/>
</dbReference>
<dbReference type="PANTHER" id="PTHR21368">
    <property type="entry name" value="50S RIBOSOMAL PROTEIN L9"/>
    <property type="match status" value="1"/>
</dbReference>
<dbReference type="Pfam" id="PF03948">
    <property type="entry name" value="Ribosomal_L9_C"/>
    <property type="match status" value="1"/>
</dbReference>
<dbReference type="Pfam" id="PF01281">
    <property type="entry name" value="Ribosomal_L9_N"/>
    <property type="match status" value="1"/>
</dbReference>
<dbReference type="SUPFAM" id="SSF55658">
    <property type="entry name" value="L9 N-domain-like"/>
    <property type="match status" value="1"/>
</dbReference>
<dbReference type="SUPFAM" id="SSF55653">
    <property type="entry name" value="Ribosomal protein L9 C-domain"/>
    <property type="match status" value="1"/>
</dbReference>
<dbReference type="PROSITE" id="PS00651">
    <property type="entry name" value="RIBOSOMAL_L9"/>
    <property type="match status" value="1"/>
</dbReference>
<evidence type="ECO:0000255" key="1">
    <source>
        <dbReference type="HAMAP-Rule" id="MF_00503"/>
    </source>
</evidence>
<evidence type="ECO:0000305" key="2"/>
<comment type="function">
    <text evidence="1">Binds to the 23S rRNA.</text>
</comment>
<comment type="similarity">
    <text evidence="1">Belongs to the bacterial ribosomal protein bL9 family.</text>
</comment>
<organism>
    <name type="scientific">Colwellia psychrerythraea (strain 34H / ATCC BAA-681)</name>
    <name type="common">Vibrio psychroerythus</name>
    <dbReference type="NCBI Taxonomy" id="167879"/>
    <lineage>
        <taxon>Bacteria</taxon>
        <taxon>Pseudomonadati</taxon>
        <taxon>Pseudomonadota</taxon>
        <taxon>Gammaproteobacteria</taxon>
        <taxon>Alteromonadales</taxon>
        <taxon>Colwelliaceae</taxon>
        <taxon>Colwellia</taxon>
    </lineage>
</organism>
<reference key="1">
    <citation type="journal article" date="2005" name="Proc. Natl. Acad. Sci. U.S.A.">
        <title>The psychrophilic lifestyle as revealed by the genome sequence of Colwellia psychrerythraea 34H through genomic and proteomic analyses.</title>
        <authorList>
            <person name="Methe B.A."/>
            <person name="Nelson K.E."/>
            <person name="Deming J.W."/>
            <person name="Momen B."/>
            <person name="Melamud E."/>
            <person name="Zhang X."/>
            <person name="Moult J."/>
            <person name="Madupu R."/>
            <person name="Nelson W.C."/>
            <person name="Dodson R.J."/>
            <person name="Brinkac L.M."/>
            <person name="Daugherty S.C."/>
            <person name="Durkin A.S."/>
            <person name="DeBoy R.T."/>
            <person name="Kolonay J.F."/>
            <person name="Sullivan S.A."/>
            <person name="Zhou L."/>
            <person name="Davidsen T.M."/>
            <person name="Wu M."/>
            <person name="Huston A.L."/>
            <person name="Lewis M."/>
            <person name="Weaver B."/>
            <person name="Weidman J.F."/>
            <person name="Khouri H."/>
            <person name="Utterback T.R."/>
            <person name="Feldblyum T.V."/>
            <person name="Fraser C.M."/>
        </authorList>
    </citation>
    <scope>NUCLEOTIDE SEQUENCE [LARGE SCALE GENOMIC DNA]</scope>
    <source>
        <strain>34H / ATCC BAA-681</strain>
    </source>
</reference>
<keyword id="KW-0687">Ribonucleoprotein</keyword>
<keyword id="KW-0689">Ribosomal protein</keyword>
<keyword id="KW-0694">RNA-binding</keyword>
<keyword id="KW-0699">rRNA-binding</keyword>
<proteinExistence type="inferred from homology"/>
<sequence length="150" mass="15847">MEVILLDKIAKLGGLGDKVSVKSGYARNYLLPQGKAVFASEANVEHFEARRADIEAKLADVLATAEARAAKVVALAEVTIASKSGDEGKLFGSIGTRDIADAITEAGVEITKAEVRLPLGAIRETGEFEIAIHLHHDVDTSIKVVVIAEA</sequence>
<gene>
    <name evidence="1" type="primary">rplI</name>
    <name type="ordered locus">CPS_0418</name>
</gene>